<evidence type="ECO:0000255" key="1">
    <source>
        <dbReference type="HAMAP-Rule" id="MF_00244"/>
    </source>
</evidence>
<organism>
    <name type="scientific">Neisseria gonorrhoeae (strain NCCP11945)</name>
    <dbReference type="NCBI Taxonomy" id="521006"/>
    <lineage>
        <taxon>Bacteria</taxon>
        <taxon>Pseudomonadati</taxon>
        <taxon>Pseudomonadota</taxon>
        <taxon>Betaproteobacteria</taxon>
        <taxon>Neisseriales</taxon>
        <taxon>Neisseriaceae</taxon>
        <taxon>Neisseria</taxon>
    </lineage>
</organism>
<protein>
    <recommendedName>
        <fullName evidence="1">Probable nicotinate-nucleotide adenylyltransferase</fullName>
        <ecNumber evidence="1">2.7.7.18</ecNumber>
    </recommendedName>
    <alternativeName>
        <fullName evidence="1">Deamido-NAD(+) diphosphorylase</fullName>
    </alternativeName>
    <alternativeName>
        <fullName evidence="1">Deamido-NAD(+) pyrophosphorylase</fullName>
    </alternativeName>
    <alternativeName>
        <fullName evidence="1">Nicotinate mononucleotide adenylyltransferase</fullName>
        <shortName evidence="1">NaMN adenylyltransferase</shortName>
    </alternativeName>
</protein>
<comment type="function">
    <text evidence="1">Catalyzes the reversible adenylation of nicotinate mononucleotide (NaMN) to nicotinic acid adenine dinucleotide (NaAD).</text>
</comment>
<comment type="catalytic activity">
    <reaction evidence="1">
        <text>nicotinate beta-D-ribonucleotide + ATP + H(+) = deamido-NAD(+) + diphosphate</text>
        <dbReference type="Rhea" id="RHEA:22860"/>
        <dbReference type="ChEBI" id="CHEBI:15378"/>
        <dbReference type="ChEBI" id="CHEBI:30616"/>
        <dbReference type="ChEBI" id="CHEBI:33019"/>
        <dbReference type="ChEBI" id="CHEBI:57502"/>
        <dbReference type="ChEBI" id="CHEBI:58437"/>
        <dbReference type="EC" id="2.7.7.18"/>
    </reaction>
</comment>
<comment type="pathway">
    <text evidence="1">Cofactor biosynthesis; NAD(+) biosynthesis; deamido-NAD(+) from nicotinate D-ribonucleotide: step 1/1.</text>
</comment>
<comment type="similarity">
    <text evidence="1">Belongs to the NadD family.</text>
</comment>
<reference key="1">
    <citation type="journal article" date="2008" name="J. Bacteriol.">
        <title>Complete genome sequence of Neisseria gonorrhoeae NCCP11945.</title>
        <authorList>
            <person name="Chung G.T."/>
            <person name="Yoo J.S."/>
            <person name="Oh H.B."/>
            <person name="Lee Y.S."/>
            <person name="Cha S.H."/>
            <person name="Kim S.J."/>
            <person name="Yoo C.K."/>
        </authorList>
    </citation>
    <scope>NUCLEOTIDE SEQUENCE [LARGE SCALE GENOMIC DNA]</scope>
    <source>
        <strain>NCCP11945</strain>
    </source>
</reference>
<feature type="chain" id="PRO_1000100785" description="Probable nicotinate-nucleotide adenylyltransferase">
    <location>
        <begin position="1"/>
        <end position="201"/>
    </location>
</feature>
<sequence length="201" mass="22237">MKKIGLFGGTFDPIHNGHFHIARAFADEIGLDAVVFLPAGGPYHKDAASASAADRLAMVELATAEDARFAVSDCDIVRESATYTFDTVQIFRRQFPSAQLWWLMGSDSLLKLHTWKKWQLLVRETNIAVAMRQGDSLHQTPRELHAWLGNALQDGSVRILSAPMHNVSSTEIRRNLSAAGVSDGIPPAAARYIRKHGLYEK</sequence>
<gene>
    <name evidence="1" type="primary">nadD</name>
    <name type="ordered locus">NGK_2542</name>
</gene>
<dbReference type="EC" id="2.7.7.18" evidence="1"/>
<dbReference type="EMBL" id="CP001050">
    <property type="protein sequence ID" value="ACF31142.1"/>
    <property type="molecule type" value="Genomic_DNA"/>
</dbReference>
<dbReference type="RefSeq" id="WP_003687035.1">
    <property type="nucleotide sequence ID" value="NC_011035.1"/>
</dbReference>
<dbReference type="SMR" id="B4RR84"/>
<dbReference type="GeneID" id="66754406"/>
<dbReference type="KEGG" id="ngk:NGK_2542"/>
<dbReference type="HOGENOM" id="CLU_069765_0_0_4"/>
<dbReference type="UniPathway" id="UPA00253">
    <property type="reaction ID" value="UER00332"/>
</dbReference>
<dbReference type="Proteomes" id="UP000002564">
    <property type="component" value="Chromosome"/>
</dbReference>
<dbReference type="GO" id="GO:0005524">
    <property type="term" value="F:ATP binding"/>
    <property type="evidence" value="ECO:0007669"/>
    <property type="project" value="UniProtKB-KW"/>
</dbReference>
<dbReference type="GO" id="GO:0004515">
    <property type="term" value="F:nicotinate-nucleotide adenylyltransferase activity"/>
    <property type="evidence" value="ECO:0007669"/>
    <property type="project" value="UniProtKB-UniRule"/>
</dbReference>
<dbReference type="GO" id="GO:0009435">
    <property type="term" value="P:NAD biosynthetic process"/>
    <property type="evidence" value="ECO:0007669"/>
    <property type="project" value="UniProtKB-UniRule"/>
</dbReference>
<dbReference type="CDD" id="cd02165">
    <property type="entry name" value="NMNAT"/>
    <property type="match status" value="1"/>
</dbReference>
<dbReference type="FunFam" id="3.40.50.620:FF:000254">
    <property type="entry name" value="Probable nicotinate-nucleotide adenylyltransferase"/>
    <property type="match status" value="1"/>
</dbReference>
<dbReference type="Gene3D" id="3.40.50.620">
    <property type="entry name" value="HUPs"/>
    <property type="match status" value="1"/>
</dbReference>
<dbReference type="HAMAP" id="MF_00244">
    <property type="entry name" value="NaMN_adenylyltr"/>
    <property type="match status" value="1"/>
</dbReference>
<dbReference type="InterPro" id="IPR004821">
    <property type="entry name" value="Cyt_trans-like"/>
</dbReference>
<dbReference type="InterPro" id="IPR005248">
    <property type="entry name" value="NadD/NMNAT"/>
</dbReference>
<dbReference type="InterPro" id="IPR014729">
    <property type="entry name" value="Rossmann-like_a/b/a_fold"/>
</dbReference>
<dbReference type="NCBIfam" id="TIGR00125">
    <property type="entry name" value="cyt_tran_rel"/>
    <property type="match status" value="1"/>
</dbReference>
<dbReference type="NCBIfam" id="TIGR00482">
    <property type="entry name" value="nicotinate (nicotinamide) nucleotide adenylyltransferase"/>
    <property type="match status" value="1"/>
</dbReference>
<dbReference type="NCBIfam" id="NF000840">
    <property type="entry name" value="PRK00071.1-3"/>
    <property type="match status" value="1"/>
</dbReference>
<dbReference type="PANTHER" id="PTHR39321">
    <property type="entry name" value="NICOTINATE-NUCLEOTIDE ADENYLYLTRANSFERASE-RELATED"/>
    <property type="match status" value="1"/>
</dbReference>
<dbReference type="PANTHER" id="PTHR39321:SF3">
    <property type="entry name" value="PHOSPHOPANTETHEINE ADENYLYLTRANSFERASE"/>
    <property type="match status" value="1"/>
</dbReference>
<dbReference type="Pfam" id="PF01467">
    <property type="entry name" value="CTP_transf_like"/>
    <property type="match status" value="1"/>
</dbReference>
<dbReference type="SUPFAM" id="SSF52374">
    <property type="entry name" value="Nucleotidylyl transferase"/>
    <property type="match status" value="1"/>
</dbReference>
<proteinExistence type="inferred from homology"/>
<accession>B4RR84</accession>
<name>NADD_NEIG2</name>
<keyword id="KW-0067">ATP-binding</keyword>
<keyword id="KW-0520">NAD</keyword>
<keyword id="KW-0547">Nucleotide-binding</keyword>
<keyword id="KW-0548">Nucleotidyltransferase</keyword>
<keyword id="KW-0662">Pyridine nucleotide biosynthesis</keyword>
<keyword id="KW-0808">Transferase</keyword>